<organism>
    <name type="scientific">Trieres chinensis</name>
    <name type="common">Marine centric diatom</name>
    <name type="synonym">Odontella sinensis</name>
    <dbReference type="NCBI Taxonomy" id="1514140"/>
    <lineage>
        <taxon>Eukaryota</taxon>
        <taxon>Sar</taxon>
        <taxon>Stramenopiles</taxon>
        <taxon>Ochrophyta</taxon>
        <taxon>Bacillariophyta</taxon>
        <taxon>Mediophyceae</taxon>
        <taxon>Biddulphiophycidae</taxon>
        <taxon>Eupodiscales</taxon>
        <taxon>Parodontellaceae</taxon>
        <taxon>Trieres</taxon>
    </lineage>
</organism>
<feature type="chain" id="PRO_0000063626" description="Chaperonin GroEL, chloroplastic">
    <location>
        <begin position="1"/>
        <end position="528"/>
    </location>
</feature>
<feature type="binding site" evidence="1">
    <location>
        <begin position="29"/>
        <end position="32"/>
    </location>
    <ligand>
        <name>ATP</name>
        <dbReference type="ChEBI" id="CHEBI:30616"/>
    </ligand>
</feature>
<feature type="binding site" evidence="1">
    <location>
        <begin position="86"/>
        <end position="90"/>
    </location>
    <ligand>
        <name>ATP</name>
        <dbReference type="ChEBI" id="CHEBI:30616"/>
    </ligand>
</feature>
<feature type="binding site" evidence="1">
    <location>
        <position position="415"/>
    </location>
    <ligand>
        <name>ATP</name>
        <dbReference type="ChEBI" id="CHEBI:30616"/>
    </ligand>
</feature>
<feature type="binding site" evidence="1">
    <location>
        <begin position="481"/>
        <end position="483"/>
    </location>
    <ligand>
        <name>ATP</name>
        <dbReference type="ChEBI" id="CHEBI:30616"/>
    </ligand>
</feature>
<feature type="binding site" evidence="1">
    <location>
        <position position="497"/>
    </location>
    <ligand>
        <name>ATP</name>
        <dbReference type="ChEBI" id="CHEBI:30616"/>
    </ligand>
</feature>
<reference key="1">
    <citation type="journal article" date="1995" name="Plant Mol. Biol. Rep.">
        <title>The chloroplast genome of a chlorophyll a+c-containing alga, Odontella sinensis.</title>
        <authorList>
            <person name="Kowallik K.V."/>
            <person name="Stoebe B."/>
            <person name="Schaffran I."/>
            <person name="Kroth-Pancic P."/>
            <person name="Freier U."/>
        </authorList>
    </citation>
    <scope>NUCLEOTIDE SEQUENCE [LARGE SCALE GENOMIC DNA]</scope>
</reference>
<comment type="function">
    <text evidence="1">Together with its co-chaperonin GroES, plays an essential role in assisting protein folding. The GroEL-GroES system forms a nano-cage that allows encapsulation of the non-native substrate proteins and provides a physical environment optimized to promote and accelerate protein folding.</text>
</comment>
<comment type="catalytic activity">
    <reaction evidence="1">
        <text>ATP + H2O + a folded polypeptide = ADP + phosphate + an unfolded polypeptide.</text>
        <dbReference type="EC" id="5.6.1.7"/>
    </reaction>
</comment>
<comment type="subunit">
    <text evidence="1">Forms a cylinder of 14 subunits composed of two heptameric rings stacked back-to-back. Interacts with the co-chaperonin GroES.</text>
</comment>
<comment type="subcellular location">
    <subcellularLocation>
        <location evidence="1">Plastid</location>
        <location evidence="1">Chloroplast</location>
    </subcellularLocation>
</comment>
<comment type="similarity">
    <text evidence="1">Belongs to the chaperonin (HSP60) family.</text>
</comment>
<keyword id="KW-0067">ATP-binding</keyword>
<keyword id="KW-0143">Chaperone</keyword>
<keyword id="KW-0150">Chloroplast</keyword>
<keyword id="KW-0413">Isomerase</keyword>
<keyword id="KW-0547">Nucleotide-binding</keyword>
<keyword id="KW-0934">Plastid</keyword>
<dbReference type="EC" id="5.6.1.7" evidence="1"/>
<dbReference type="EMBL" id="Z67753">
    <property type="protein sequence ID" value="CAA91651.1"/>
    <property type="molecule type" value="Genomic_DNA"/>
</dbReference>
<dbReference type="PIR" id="S78278">
    <property type="entry name" value="S78278"/>
</dbReference>
<dbReference type="RefSeq" id="NP_043619.1">
    <property type="nucleotide sequence ID" value="NC_001713.1"/>
</dbReference>
<dbReference type="SMR" id="P49464"/>
<dbReference type="GeneID" id="801694"/>
<dbReference type="GO" id="GO:0009507">
    <property type="term" value="C:chloroplast"/>
    <property type="evidence" value="ECO:0007669"/>
    <property type="project" value="UniProtKB-SubCell"/>
</dbReference>
<dbReference type="GO" id="GO:0005524">
    <property type="term" value="F:ATP binding"/>
    <property type="evidence" value="ECO:0007669"/>
    <property type="project" value="UniProtKB-UniRule"/>
</dbReference>
<dbReference type="GO" id="GO:0140662">
    <property type="term" value="F:ATP-dependent protein folding chaperone"/>
    <property type="evidence" value="ECO:0007669"/>
    <property type="project" value="InterPro"/>
</dbReference>
<dbReference type="GO" id="GO:0016853">
    <property type="term" value="F:isomerase activity"/>
    <property type="evidence" value="ECO:0007669"/>
    <property type="project" value="UniProtKB-KW"/>
</dbReference>
<dbReference type="GO" id="GO:0051082">
    <property type="term" value="F:unfolded protein binding"/>
    <property type="evidence" value="ECO:0007669"/>
    <property type="project" value="UniProtKB-UniRule"/>
</dbReference>
<dbReference type="GO" id="GO:0042026">
    <property type="term" value="P:protein refolding"/>
    <property type="evidence" value="ECO:0007669"/>
    <property type="project" value="UniProtKB-UniRule"/>
</dbReference>
<dbReference type="CDD" id="cd03344">
    <property type="entry name" value="GroEL"/>
    <property type="match status" value="1"/>
</dbReference>
<dbReference type="FunFam" id="3.50.7.10:FF:000001">
    <property type="entry name" value="60 kDa chaperonin"/>
    <property type="match status" value="1"/>
</dbReference>
<dbReference type="Gene3D" id="3.50.7.10">
    <property type="entry name" value="GroEL"/>
    <property type="match status" value="1"/>
</dbReference>
<dbReference type="Gene3D" id="1.10.560.10">
    <property type="entry name" value="GroEL-like equatorial domain"/>
    <property type="match status" value="1"/>
</dbReference>
<dbReference type="Gene3D" id="3.30.260.10">
    <property type="entry name" value="TCP-1-like chaperonin intermediate domain"/>
    <property type="match status" value="1"/>
</dbReference>
<dbReference type="HAMAP" id="MF_00600">
    <property type="entry name" value="CH60"/>
    <property type="match status" value="1"/>
</dbReference>
<dbReference type="InterPro" id="IPR018370">
    <property type="entry name" value="Chaperonin_Cpn60_CS"/>
</dbReference>
<dbReference type="InterPro" id="IPR001844">
    <property type="entry name" value="Cpn60/GroEL"/>
</dbReference>
<dbReference type="InterPro" id="IPR002423">
    <property type="entry name" value="Cpn60/GroEL/TCP-1"/>
</dbReference>
<dbReference type="InterPro" id="IPR027409">
    <property type="entry name" value="GroEL-like_apical_dom_sf"/>
</dbReference>
<dbReference type="InterPro" id="IPR027413">
    <property type="entry name" value="GROEL-like_equatorial_sf"/>
</dbReference>
<dbReference type="InterPro" id="IPR027410">
    <property type="entry name" value="TCP-1-like_intermed_sf"/>
</dbReference>
<dbReference type="NCBIfam" id="TIGR02348">
    <property type="entry name" value="GroEL"/>
    <property type="match status" value="1"/>
</dbReference>
<dbReference type="NCBIfam" id="NF000592">
    <property type="entry name" value="PRK00013.1"/>
    <property type="match status" value="1"/>
</dbReference>
<dbReference type="NCBIfam" id="NF009487">
    <property type="entry name" value="PRK12849.1"/>
    <property type="match status" value="1"/>
</dbReference>
<dbReference type="NCBIfam" id="NF009488">
    <property type="entry name" value="PRK12850.1"/>
    <property type="match status" value="1"/>
</dbReference>
<dbReference type="NCBIfam" id="NF009489">
    <property type="entry name" value="PRK12851.1"/>
    <property type="match status" value="1"/>
</dbReference>
<dbReference type="PANTHER" id="PTHR45633">
    <property type="entry name" value="60 KDA HEAT SHOCK PROTEIN, MITOCHONDRIAL"/>
    <property type="match status" value="1"/>
</dbReference>
<dbReference type="Pfam" id="PF00118">
    <property type="entry name" value="Cpn60_TCP1"/>
    <property type="match status" value="1"/>
</dbReference>
<dbReference type="PRINTS" id="PR00298">
    <property type="entry name" value="CHAPERONIN60"/>
</dbReference>
<dbReference type="SUPFAM" id="SSF52029">
    <property type="entry name" value="GroEL apical domain-like"/>
    <property type="match status" value="1"/>
</dbReference>
<dbReference type="SUPFAM" id="SSF48592">
    <property type="entry name" value="GroEL equatorial domain-like"/>
    <property type="match status" value="1"/>
</dbReference>
<dbReference type="SUPFAM" id="SSF54849">
    <property type="entry name" value="GroEL-intermediate domain like"/>
    <property type="match status" value="1"/>
</dbReference>
<dbReference type="PROSITE" id="PS00296">
    <property type="entry name" value="CHAPERONINS_CPN60"/>
    <property type="match status" value="1"/>
</dbReference>
<evidence type="ECO:0000255" key="1">
    <source>
        <dbReference type="HAMAP-Rule" id="MF_00600"/>
    </source>
</evidence>
<proteinExistence type="inferred from homology"/>
<accession>P49464</accession>
<name>CH60_TRICV</name>
<geneLocation type="chloroplast"/>
<gene>
    <name evidence="1" type="primary">groEL</name>
    <name evidence="1" type="synonym">groL</name>
</gene>
<sequence>MAKKILYQDNARRALERGMEIMVEAVSVTLGPKGRNVVLEKPYGSPQIVNDGVTIAKEINLEDHIENTGVALIRQAASKTNDVAGDGTTTATVLAYAMVKEGLKNVTAGANPISIKLGMEKATQYLVTQINEFAQPVEDIQSIEQVASISAGNDNLIGSLIADALSKVGKEGVISLEEGKGIITELEITEGMKLEKGFISPYFITNTEKMEVSYENPFILLTDKRITLVQQDLLPILEQITKTKRPLLLIAEDVEKEALATLILNKLRGIVNVVAVRAPGFGELRKQMLEDIAVLTGGTVITQDAGLSLENIQVNLLGQARRIIVNKDSTTIVGDGLEIEQIKARCEQLRKQVNIADTGYEKEKLQDRIAKLSGGIAVIRVGAVTETEMKDKKLRLEDAINATRAAVEEGIVPGGGATLAHLAENLLTWAKINLKEDELIGAMIISRAIVAPLKRIAENAGINGPVIIEKVQQQEFEIGYNAAKNVFGNMYDEGIVDPAKVTRSGLQNATSIASMILTTECIIVDETD</sequence>
<protein>
    <recommendedName>
        <fullName evidence="1">Chaperonin GroEL, chloroplastic</fullName>
        <ecNumber evidence="1">5.6.1.7</ecNumber>
    </recommendedName>
    <alternativeName>
        <fullName evidence="1">60 kDa chaperonin</fullName>
    </alternativeName>
    <alternativeName>
        <fullName evidence="1">Chaperonin-60</fullName>
        <shortName evidence="1">Cpn60</shortName>
    </alternativeName>
</protein>